<reference key="1">
    <citation type="journal article" date="2007" name="J. Bacteriol.">
        <title>Catalytic properties of Staphylococcus aureus and Bacillus members of the secondary cation/proton antiporter-3 (Mrp) family are revealed by an optimized assay in an Escherichia coli host.</title>
        <authorList>
            <person name="Swartz T.H."/>
            <person name="Ito M."/>
            <person name="Ohira T."/>
            <person name="Natsui S."/>
            <person name="Hicks D.B."/>
            <person name="Krulwich T.A."/>
        </authorList>
    </citation>
    <scope>NUCLEOTIDE SEQUENCE [GENOMIC DNA]</scope>
    <scope>EXPRESSION IN E.COLI</scope>
    <source>
        <strain>RF4220</strain>
    </source>
</reference>
<dbReference type="EMBL" id="DQ659239">
    <property type="protein sequence ID" value="ABG67117.1"/>
    <property type="molecule type" value="Genomic_DNA"/>
</dbReference>
<dbReference type="RefSeq" id="WP_000060776.1">
    <property type="nucleotide sequence ID" value="NZ_WWFR01000001.1"/>
</dbReference>
<dbReference type="SMR" id="Q0Q2K0"/>
<dbReference type="OMA" id="PDSMVAI"/>
<dbReference type="GO" id="GO:0005886">
    <property type="term" value="C:plasma membrane"/>
    <property type="evidence" value="ECO:0007669"/>
    <property type="project" value="UniProtKB-SubCell"/>
</dbReference>
<dbReference type="GO" id="GO:0015297">
    <property type="term" value="F:antiporter activity"/>
    <property type="evidence" value="ECO:0007669"/>
    <property type="project" value="UniProtKB-KW"/>
</dbReference>
<dbReference type="GO" id="GO:0006811">
    <property type="term" value="P:monoatomic ion transport"/>
    <property type="evidence" value="ECO:0007669"/>
    <property type="project" value="UniProtKB-KW"/>
</dbReference>
<dbReference type="InterPro" id="IPR050616">
    <property type="entry name" value="CPA3_Na-H_Antiporter_A"/>
</dbReference>
<dbReference type="InterPro" id="IPR025383">
    <property type="entry name" value="MrpA_C/MbhD"/>
</dbReference>
<dbReference type="InterPro" id="IPR046806">
    <property type="entry name" value="MrpA_C/MbhE"/>
</dbReference>
<dbReference type="InterPro" id="IPR001750">
    <property type="entry name" value="ND/Mrp_TM"/>
</dbReference>
<dbReference type="InterPro" id="IPR001516">
    <property type="entry name" value="Proton_antipo_N"/>
</dbReference>
<dbReference type="NCBIfam" id="NF009286">
    <property type="entry name" value="PRK12646.1"/>
    <property type="match status" value="1"/>
</dbReference>
<dbReference type="PANTHER" id="PTHR43373">
    <property type="entry name" value="NA(+)/H(+) ANTIPORTER SUBUNIT"/>
    <property type="match status" value="1"/>
</dbReference>
<dbReference type="PANTHER" id="PTHR43373:SF1">
    <property type="entry name" value="NA(+)_H(+) ANTIPORTER SUBUNIT A"/>
    <property type="match status" value="1"/>
</dbReference>
<dbReference type="Pfam" id="PF13244">
    <property type="entry name" value="MbhD"/>
    <property type="match status" value="1"/>
</dbReference>
<dbReference type="Pfam" id="PF20501">
    <property type="entry name" value="MbhE"/>
    <property type="match status" value="1"/>
</dbReference>
<dbReference type="Pfam" id="PF00361">
    <property type="entry name" value="Proton_antipo_M"/>
    <property type="match status" value="1"/>
</dbReference>
<dbReference type="Pfam" id="PF00662">
    <property type="entry name" value="Proton_antipo_N"/>
    <property type="match status" value="1"/>
</dbReference>
<dbReference type="PRINTS" id="PR01434">
    <property type="entry name" value="NADHDHGNASE5"/>
</dbReference>
<name>MNHA2_STAAU</name>
<keyword id="KW-0050">Antiport</keyword>
<keyword id="KW-1003">Cell membrane</keyword>
<keyword id="KW-0406">Ion transport</keyword>
<keyword id="KW-0472">Membrane</keyword>
<keyword id="KW-0812">Transmembrane</keyword>
<keyword id="KW-1133">Transmembrane helix</keyword>
<keyword id="KW-0813">Transport</keyword>
<protein>
    <recommendedName>
        <fullName>Putative antiporter subunit mnhA2</fullName>
    </recommendedName>
    <alternativeName>
        <fullName>Mrp complex subunit A2</fullName>
    </alternativeName>
    <alternativeName>
        <fullName>Putative NADH-ubiquinone oxidoreductase subunit mnhA2</fullName>
    </alternativeName>
</protein>
<proteinExistence type="inferred from homology"/>
<feature type="chain" id="PRO_0000372285" description="Putative antiporter subunit mnhA2">
    <location>
        <begin position="1"/>
        <end position="800"/>
    </location>
</feature>
<feature type="transmembrane region" description="Helical" evidence="2">
    <location>
        <begin position="1"/>
        <end position="21"/>
    </location>
</feature>
<feature type="transmembrane region" description="Helical" evidence="2">
    <location>
        <begin position="33"/>
        <end position="53"/>
    </location>
</feature>
<feature type="transmembrane region" description="Helical" evidence="2">
    <location>
        <begin position="78"/>
        <end position="98"/>
    </location>
</feature>
<feature type="transmembrane region" description="Helical" evidence="2">
    <location>
        <begin position="118"/>
        <end position="138"/>
    </location>
</feature>
<feature type="transmembrane region" description="Helical" evidence="2">
    <location>
        <begin position="167"/>
        <end position="187"/>
    </location>
</feature>
<feature type="transmembrane region" description="Helical" evidence="2">
    <location>
        <begin position="207"/>
        <end position="227"/>
    </location>
</feature>
<feature type="transmembrane region" description="Helical" evidence="2">
    <location>
        <begin position="241"/>
        <end position="261"/>
    </location>
</feature>
<feature type="transmembrane region" description="Helical" evidence="2">
    <location>
        <begin position="273"/>
        <end position="293"/>
    </location>
</feature>
<feature type="transmembrane region" description="Helical" evidence="2">
    <location>
        <begin position="300"/>
        <end position="320"/>
    </location>
</feature>
<feature type="transmembrane region" description="Helical" evidence="2">
    <location>
        <begin position="331"/>
        <end position="351"/>
    </location>
</feature>
<feature type="transmembrane region" description="Helical" evidence="2">
    <location>
        <begin position="387"/>
        <end position="407"/>
    </location>
</feature>
<feature type="transmembrane region" description="Helical" evidence="2">
    <location>
        <begin position="424"/>
        <end position="444"/>
    </location>
</feature>
<feature type="transmembrane region" description="Helical" evidence="2">
    <location>
        <begin position="472"/>
        <end position="492"/>
    </location>
</feature>
<feature type="transmembrane region" description="Helical" evidence="2">
    <location>
        <begin position="527"/>
        <end position="547"/>
    </location>
</feature>
<feature type="transmembrane region" description="Helical" evidence="2">
    <location>
        <begin position="595"/>
        <end position="615"/>
    </location>
</feature>
<feature type="transmembrane region" description="Helical" evidence="2">
    <location>
        <begin position="627"/>
        <end position="647"/>
    </location>
</feature>
<feature type="transmembrane region" description="Helical" evidence="2">
    <location>
        <begin position="651"/>
        <end position="671"/>
    </location>
</feature>
<feature type="transmembrane region" description="Helical" evidence="2">
    <location>
        <begin position="676"/>
        <end position="696"/>
    </location>
</feature>
<feature type="transmembrane region" description="Helical" evidence="2">
    <location>
        <begin position="712"/>
        <end position="732"/>
    </location>
</feature>
<feature type="transmembrane region" description="Helical" evidence="2">
    <location>
        <begin position="768"/>
        <end position="788"/>
    </location>
</feature>
<gene>
    <name type="primary">mnhA2</name>
    <name type="synonym">mrpA2</name>
</gene>
<accession>Q0Q2K0</accession>
<sequence length="800" mass="89687">MSLVYLLIAILVIMAMILLMSKRRALAKYAGYIALVAPVISSIYFLIQIPSVAKLQYLSTSIPWIKTLDINLDLRLDGLSLMFSLIISLIGIAVFFYATQYLSSRKDNLPRFYFYLTLFMFSMIGIVLSDNTILMYIFWELTSVSSFLLISYWYNNGDSQFGAIQSFMITVFGGLALLVGFIMLYIMTGTNNITEILGQADHIKNHGLFIPMIFMFLLGAFTKSAQFPFHIWLPRAMAAPTPVSAYLHSATMVKAGIFLLLRFTPLLGLSNMYVYIVTFVGLITMLFGSITALKQWDLKGILAYSTISQLGMIMAMVGIGGGYAQHQQDAIASIYVFVLFGALFHLMNHAIFKCALFMGVGILDHEAGSRDIRILSGMRQLFPKMNLVMTIAALSMAGVPFLNGFLSKEMFLDALTQTGQLSQFSLISMIAIVFVGVIASVFTFTYALYMVKEVFWTKYDSKVFTKKNIHEPWLFSLPSLILMVLVPVIFFVPNIFGKGIIVLALRAVSGGNHQIDQLAPHVSQWHGFNIPLLLTIIIILLGSVLAIKVDWKKVFTGKIRQISVSKSYEMVYRHFEKFATKRFKRVMQDRLNQYIIMTLGIFMIIIGYGYIRIGLPKVHQLHVSEFGALEIILAIVTVTIGISLIFIRQRLTMVILNGVIGFVVTLFFIAMKAPDLALTQLVVETITTILFIVSFSRLPNVPRSNANKKREIIKISVSLLMALIVVSLIFITQQTDGLSSISDFYLKADKLTGGKNIVNAILGDFRALDTLFEGLVLIITGLGIYTLLNYQDRRGQDERE</sequence>
<evidence type="ECO:0000250" key="1"/>
<evidence type="ECO:0000255" key="2"/>
<evidence type="ECO:0000305" key="3"/>
<organism>
    <name type="scientific">Staphylococcus aureus</name>
    <dbReference type="NCBI Taxonomy" id="1280"/>
    <lineage>
        <taxon>Bacteria</taxon>
        <taxon>Bacillati</taxon>
        <taxon>Bacillota</taxon>
        <taxon>Bacilli</taxon>
        <taxon>Bacillales</taxon>
        <taxon>Staphylococcaceae</taxon>
        <taxon>Staphylococcus</taxon>
    </lineage>
</organism>
<comment type="function">
    <text>Expression of the mnh2 operon in E.coli is not able to catalyze Na(+)Li(+)/H(+) antiport. It does however confer higher growth rates than the control strain at up to pH 9.5. The operon may encode an NADH-ubiquinone oxidoreductase.</text>
</comment>
<comment type="subunit">
    <text evidence="1">May form a heterooligomeric complex that consists of seven subunits: mnhA2, mnhB2, mnhC2, mnhD2, mnhE2, mnhF2 and mnhG2.</text>
</comment>
<comment type="subcellular location">
    <subcellularLocation>
        <location evidence="3">Cell membrane</location>
        <topology evidence="3">Multi-pass membrane protein</topology>
    </subcellularLocation>
</comment>
<comment type="similarity">
    <text evidence="3">Belongs to the CPA3 antiporters (TC 2.A.63) subunit A family.</text>
</comment>